<evidence type="ECO:0000255" key="1">
    <source>
        <dbReference type="PROSITE-ProRule" id="PRU01185"/>
    </source>
</evidence>
<evidence type="ECO:0000269" key="2">
    <source>
    </source>
</evidence>
<evidence type="ECO:0000269" key="3">
    <source>
    </source>
</evidence>
<evidence type="ECO:0000305" key="4"/>
<evidence type="ECO:0007829" key="5">
    <source>
        <dbReference type="PDB" id="2MR3"/>
    </source>
</evidence>
<evidence type="ECO:0007829" key="6">
    <source>
        <dbReference type="PDB" id="3JCK"/>
    </source>
</evidence>
<sequence>MFNNHEIDTILSTLRMEADPSLHPLFEQFEKFYEEKLWFQLSESLTKFFDDAKSTPLRLRLYDNFVSKFYDKINQLSVVKYLLASLKDSKDFDESLKYLDDLKAQFQELDSKKQRNNGSKDHGDGILLIDSEIARTYLLKNDLVKARDLLDDLEKTLDKKDSIPLRITNSFYSTNSQYFKFKNDFNSFYYTSLLYLSTLEPSTSITLAERQQLAYDLSISALLGDKIYNFGELLHHPIMETIVNDSNYDWLFQLLNALTVGDFDKFDSLIKVQISKIPILAQHESFLRQKICLMTLIETVFVKNIRMLSFEDISKATHLPKDNVEHLVMRAISLGLLKGSIDQVNELVTISWVQPRIISGDQITKMKDRLVEWNDQVEKLGKKMEARGQSIWV</sequence>
<reference key="1">
    <citation type="journal article" date="1997" name="Nature">
        <title>The nucleotide sequence of Saccharomyces cerevisiae chromosome IV.</title>
        <authorList>
            <person name="Jacq C."/>
            <person name="Alt-Moerbe J."/>
            <person name="Andre B."/>
            <person name="Arnold W."/>
            <person name="Bahr A."/>
            <person name="Ballesta J.P.G."/>
            <person name="Bargues M."/>
            <person name="Baron L."/>
            <person name="Becker A."/>
            <person name="Biteau N."/>
            <person name="Bloecker H."/>
            <person name="Blugeon C."/>
            <person name="Boskovic J."/>
            <person name="Brandt P."/>
            <person name="Brueckner M."/>
            <person name="Buitrago M.J."/>
            <person name="Coster F."/>
            <person name="Delaveau T."/>
            <person name="del Rey F."/>
            <person name="Dujon B."/>
            <person name="Eide L.G."/>
            <person name="Garcia-Cantalejo J.M."/>
            <person name="Goffeau A."/>
            <person name="Gomez-Peris A."/>
            <person name="Granotier C."/>
            <person name="Hanemann V."/>
            <person name="Hankeln T."/>
            <person name="Hoheisel J.D."/>
            <person name="Jaeger W."/>
            <person name="Jimenez A."/>
            <person name="Jonniaux J.-L."/>
            <person name="Kraemer C."/>
            <person name="Kuester H."/>
            <person name="Laamanen P."/>
            <person name="Legros Y."/>
            <person name="Louis E.J."/>
            <person name="Moeller-Rieker S."/>
            <person name="Monnet A."/>
            <person name="Moro M."/>
            <person name="Mueller-Auer S."/>
            <person name="Nussbaumer B."/>
            <person name="Paricio N."/>
            <person name="Paulin L."/>
            <person name="Perea J."/>
            <person name="Perez-Alonso M."/>
            <person name="Perez-Ortin J.E."/>
            <person name="Pohl T.M."/>
            <person name="Prydz H."/>
            <person name="Purnelle B."/>
            <person name="Rasmussen S.W."/>
            <person name="Remacha M.A."/>
            <person name="Revuelta J.L."/>
            <person name="Rieger M."/>
            <person name="Salom D."/>
            <person name="Saluz H.P."/>
            <person name="Saiz J.E."/>
            <person name="Saren A.-M."/>
            <person name="Schaefer M."/>
            <person name="Scharfe M."/>
            <person name="Schmidt E.R."/>
            <person name="Schneider C."/>
            <person name="Scholler P."/>
            <person name="Schwarz S."/>
            <person name="Soler-Mira A."/>
            <person name="Urrestarazu L.A."/>
            <person name="Verhasselt P."/>
            <person name="Vissers S."/>
            <person name="Voet M."/>
            <person name="Volckaert G."/>
            <person name="Wagner G."/>
            <person name="Wambutt R."/>
            <person name="Wedler E."/>
            <person name="Wedler H."/>
            <person name="Woelfl S."/>
            <person name="Harris D.E."/>
            <person name="Bowman S."/>
            <person name="Brown D."/>
            <person name="Churcher C.M."/>
            <person name="Connor R."/>
            <person name="Dedman K."/>
            <person name="Gentles S."/>
            <person name="Hamlin N."/>
            <person name="Hunt S."/>
            <person name="Jones L."/>
            <person name="McDonald S."/>
            <person name="Murphy L.D."/>
            <person name="Niblett D."/>
            <person name="Odell C."/>
            <person name="Oliver K."/>
            <person name="Rajandream M.A."/>
            <person name="Richards C."/>
            <person name="Shore L."/>
            <person name="Walsh S.V."/>
            <person name="Barrell B.G."/>
            <person name="Dietrich F.S."/>
            <person name="Mulligan J.T."/>
            <person name="Allen E."/>
            <person name="Araujo R."/>
            <person name="Aviles E."/>
            <person name="Berno A."/>
            <person name="Carpenter J."/>
            <person name="Chen E."/>
            <person name="Cherry J.M."/>
            <person name="Chung E."/>
            <person name="Duncan M."/>
            <person name="Hunicke-Smith S."/>
            <person name="Hyman R.W."/>
            <person name="Komp C."/>
            <person name="Lashkari D."/>
            <person name="Lew H."/>
            <person name="Lin D."/>
            <person name="Mosedale D."/>
            <person name="Nakahara K."/>
            <person name="Namath A."/>
            <person name="Oefner P."/>
            <person name="Oh C."/>
            <person name="Petel F.X."/>
            <person name="Roberts D."/>
            <person name="Schramm S."/>
            <person name="Schroeder M."/>
            <person name="Shogren T."/>
            <person name="Shroff N."/>
            <person name="Winant A."/>
            <person name="Yelton M.A."/>
            <person name="Botstein D."/>
            <person name="Davis R.W."/>
            <person name="Johnston M."/>
            <person name="Andrews S."/>
            <person name="Brinkman R."/>
            <person name="Cooper J."/>
            <person name="Ding H."/>
            <person name="Du Z."/>
            <person name="Favello A."/>
            <person name="Fulton L."/>
            <person name="Gattung S."/>
            <person name="Greco T."/>
            <person name="Hallsworth K."/>
            <person name="Hawkins J."/>
            <person name="Hillier L.W."/>
            <person name="Jier M."/>
            <person name="Johnson D."/>
            <person name="Johnston L."/>
            <person name="Kirsten J."/>
            <person name="Kucaba T."/>
            <person name="Langston Y."/>
            <person name="Latreille P."/>
            <person name="Le T."/>
            <person name="Mardis E."/>
            <person name="Menezes S."/>
            <person name="Miller N."/>
            <person name="Nhan M."/>
            <person name="Pauley A."/>
            <person name="Peluso D."/>
            <person name="Rifkin L."/>
            <person name="Riles L."/>
            <person name="Taich A."/>
            <person name="Trevaskis E."/>
            <person name="Vignati D."/>
            <person name="Wilcox L."/>
            <person name="Wohldman P."/>
            <person name="Vaudin M."/>
            <person name="Wilson R."/>
            <person name="Waterston R."/>
            <person name="Albermann K."/>
            <person name="Hani J."/>
            <person name="Heumann K."/>
            <person name="Kleine K."/>
            <person name="Mewes H.-W."/>
            <person name="Zollner A."/>
            <person name="Zaccaria P."/>
        </authorList>
    </citation>
    <scope>NUCLEOTIDE SEQUENCE [LARGE SCALE GENOMIC DNA]</scope>
    <source>
        <strain>ATCC 204508 / S288c</strain>
    </source>
</reference>
<reference key="2">
    <citation type="journal article" date="2014" name="G3 (Bethesda)">
        <title>The reference genome sequence of Saccharomyces cerevisiae: Then and now.</title>
        <authorList>
            <person name="Engel S.R."/>
            <person name="Dietrich F.S."/>
            <person name="Fisk D.G."/>
            <person name="Binkley G."/>
            <person name="Balakrishnan R."/>
            <person name="Costanzo M.C."/>
            <person name="Dwight S.S."/>
            <person name="Hitz B.C."/>
            <person name="Karra K."/>
            <person name="Nash R.S."/>
            <person name="Weng S."/>
            <person name="Wong E.D."/>
            <person name="Lloyd P."/>
            <person name="Skrzypek M.S."/>
            <person name="Miyasato S.R."/>
            <person name="Simison M."/>
            <person name="Cherry J.M."/>
        </authorList>
    </citation>
    <scope>GENOME REANNOTATION</scope>
    <source>
        <strain>ATCC 204508 / S288c</strain>
    </source>
</reference>
<reference key="3">
    <citation type="journal article" date="2003" name="Arch. Biochem. Biophys.">
        <title>N-terminal modifications of the 19S regulatory particle subunits of the yeast proteasome.</title>
        <authorList>
            <person name="Kimura Y."/>
            <person name="Saeki Y."/>
            <person name="Yokosawa H."/>
            <person name="Polevoda B."/>
            <person name="Sherman F."/>
            <person name="Hirano H."/>
        </authorList>
    </citation>
    <scope>PROTEIN SEQUENCE OF 1-6</scope>
</reference>
<reference key="4">
    <citation type="journal article" date="1998" name="Gene">
        <title>cDNA cloning and functional analysis of p28 (Nas6p) and p40.5 (Nas7p), two novel regulatory subunits of the 26S proteasome.</title>
        <authorList>
            <person name="Hori T."/>
            <person name="Kato S."/>
            <person name="Saeki M."/>
            <person name="DeMartino G.N."/>
            <person name="Slaughter C.A."/>
            <person name="Takeuchi J."/>
            <person name="Toh-e A."/>
            <person name="Tanaka K."/>
        </authorList>
    </citation>
    <scope>FUNCTION</scope>
</reference>
<reference key="5">
    <citation type="journal article" date="2003" name="Nature">
        <title>Global analysis of protein expression in yeast.</title>
        <authorList>
            <person name="Ghaemmaghami S."/>
            <person name="Huh W.-K."/>
            <person name="Bower K."/>
            <person name="Howson R.W."/>
            <person name="Belle A."/>
            <person name="Dephoure N."/>
            <person name="O'Shea E.K."/>
            <person name="Weissman J.S."/>
        </authorList>
    </citation>
    <scope>LEVEL OF PROTEIN EXPRESSION [LARGE SCALE ANALYSIS]</scope>
</reference>
<reference key="6">
    <citation type="journal article" date="2012" name="Proc. Natl. Acad. Sci. U.S.A.">
        <title>N-terminal acetylome analyses and functional insights of the N-terminal acetyltransferase NatB.</title>
        <authorList>
            <person name="Van Damme P."/>
            <person name="Lasa M."/>
            <person name="Polevoda B."/>
            <person name="Gazquez C."/>
            <person name="Elosegui-Artola A."/>
            <person name="Kim D.S."/>
            <person name="De Juan-Pardo E."/>
            <person name="Demeyer K."/>
            <person name="Hole K."/>
            <person name="Larrea E."/>
            <person name="Timmerman E."/>
            <person name="Prieto J."/>
            <person name="Arnesen T."/>
            <person name="Sherman F."/>
            <person name="Gevaert K."/>
            <person name="Aldabe R."/>
        </authorList>
    </citation>
    <scope>IDENTIFICATION BY MASS SPECTROMETRY [LARGE SCALE ANALYSIS]</scope>
</reference>
<reference key="7">
    <citation type="journal article" date="2012" name="Proc. Natl. Acad. Sci. U.S.A.">
        <title>Near-atomic resolution structural model of the yeast 26S proteasome.</title>
        <authorList>
            <person name="Beck F."/>
            <person name="Unverdorben P."/>
            <person name="Bohn S."/>
            <person name="Schweitzer A."/>
            <person name="Pfeifer G."/>
            <person name="Sakata E."/>
            <person name="Nickell S."/>
            <person name="Plitzko J.M."/>
            <person name="Villa E."/>
            <person name="Baumeister W."/>
            <person name="Forster F."/>
        </authorList>
    </citation>
    <scope>STRUCTURE BY ELECTRON MICROSCOPY (7.4 ANGSTROMS) OF THE 26S PROTEASOME</scope>
</reference>
<protein>
    <recommendedName>
        <fullName>26S proteasome regulatory subunit RPN9</fullName>
    </recommendedName>
    <alternativeName>
        <fullName>Proteasome non-ATPase subunit 7</fullName>
    </alternativeName>
</protein>
<accession>Q04062</accession>
<accession>D6VT56</accession>
<name>RPN9_YEAST</name>
<dbReference type="EMBL" id="U33007">
    <property type="protein sequence ID" value="AAB64853.1"/>
    <property type="molecule type" value="Genomic_DNA"/>
</dbReference>
<dbReference type="EMBL" id="BK006938">
    <property type="protein sequence ID" value="DAA12266.1"/>
    <property type="molecule type" value="Genomic_DNA"/>
</dbReference>
<dbReference type="PIR" id="S69708">
    <property type="entry name" value="S69708"/>
</dbReference>
<dbReference type="RefSeq" id="NP_010715.3">
    <property type="nucleotide sequence ID" value="NM_001180735.3"/>
</dbReference>
<dbReference type="PDB" id="2MQW">
    <property type="method" value="NMR"/>
    <property type="chains" value="A=1-160"/>
</dbReference>
<dbReference type="PDB" id="2MR3">
    <property type="method" value="NMR"/>
    <property type="chains" value="A=1-393"/>
</dbReference>
<dbReference type="PDB" id="2MRI">
    <property type="method" value="NMR"/>
    <property type="chains" value="A=181-356"/>
</dbReference>
<dbReference type="PDB" id="3J47">
    <property type="method" value="EM"/>
    <property type="chains" value="O=360-387"/>
</dbReference>
<dbReference type="PDB" id="3JCK">
    <property type="method" value="EM"/>
    <property type="resolution" value="3.50 A"/>
    <property type="chains" value="F=1-393"/>
</dbReference>
<dbReference type="PDB" id="3JCO">
    <property type="method" value="EM"/>
    <property type="resolution" value="4.80 A"/>
    <property type="chains" value="O=1-393"/>
</dbReference>
<dbReference type="PDB" id="3JCP">
    <property type="method" value="EM"/>
    <property type="resolution" value="4.60 A"/>
    <property type="chains" value="O=1-393"/>
</dbReference>
<dbReference type="PDB" id="4CR2">
    <property type="method" value="EM"/>
    <property type="resolution" value="7.70 A"/>
    <property type="chains" value="O=1-393"/>
</dbReference>
<dbReference type="PDB" id="4CR3">
    <property type="method" value="EM"/>
    <property type="resolution" value="9.30 A"/>
    <property type="chains" value="O=1-393"/>
</dbReference>
<dbReference type="PDB" id="4CR4">
    <property type="method" value="EM"/>
    <property type="resolution" value="8.80 A"/>
    <property type="chains" value="O=1-393"/>
</dbReference>
<dbReference type="PDB" id="5A5B">
    <property type="method" value="EM"/>
    <property type="resolution" value="9.50 A"/>
    <property type="chains" value="O=1-393"/>
</dbReference>
<dbReference type="PDB" id="5MPB">
    <property type="method" value="EM"/>
    <property type="resolution" value="7.80 A"/>
    <property type="chains" value="O=1-393"/>
</dbReference>
<dbReference type="PDB" id="5MPC">
    <property type="method" value="EM"/>
    <property type="resolution" value="7.70 A"/>
    <property type="chains" value="O=1-393"/>
</dbReference>
<dbReference type="PDB" id="5MPD">
    <property type="method" value="EM"/>
    <property type="resolution" value="4.10 A"/>
    <property type="chains" value="O=1-393"/>
</dbReference>
<dbReference type="PDB" id="5MPE">
    <property type="method" value="EM"/>
    <property type="resolution" value="4.50 A"/>
    <property type="chains" value="O=1-393"/>
</dbReference>
<dbReference type="PDB" id="5WVI">
    <property type="method" value="EM"/>
    <property type="resolution" value="6.30 A"/>
    <property type="chains" value="O=1-393"/>
</dbReference>
<dbReference type="PDB" id="5WVK">
    <property type="method" value="EM"/>
    <property type="resolution" value="4.20 A"/>
    <property type="chains" value="O=1-393"/>
</dbReference>
<dbReference type="PDB" id="6FVT">
    <property type="method" value="EM"/>
    <property type="resolution" value="4.10 A"/>
    <property type="chains" value="O=6-393"/>
</dbReference>
<dbReference type="PDB" id="6FVU">
    <property type="method" value="EM"/>
    <property type="resolution" value="4.50 A"/>
    <property type="chains" value="O=6-393"/>
</dbReference>
<dbReference type="PDB" id="6FVV">
    <property type="method" value="EM"/>
    <property type="resolution" value="5.40 A"/>
    <property type="chains" value="O=6-393"/>
</dbReference>
<dbReference type="PDB" id="6FVW">
    <property type="method" value="EM"/>
    <property type="resolution" value="4.50 A"/>
    <property type="chains" value="O=6-393"/>
</dbReference>
<dbReference type="PDB" id="6FVX">
    <property type="method" value="EM"/>
    <property type="resolution" value="4.90 A"/>
    <property type="chains" value="O=6-393"/>
</dbReference>
<dbReference type="PDB" id="6FVY">
    <property type="method" value="EM"/>
    <property type="resolution" value="6.10 A"/>
    <property type="chains" value="O=6-393"/>
</dbReference>
<dbReference type="PDB" id="6J2C">
    <property type="method" value="EM"/>
    <property type="resolution" value="7.00 A"/>
    <property type="chains" value="O=1-393"/>
</dbReference>
<dbReference type="PDB" id="6J2N">
    <property type="method" value="EM"/>
    <property type="resolution" value="7.50 A"/>
    <property type="chains" value="O=1-393"/>
</dbReference>
<dbReference type="PDB" id="6J2Q">
    <property type="method" value="EM"/>
    <property type="resolution" value="3.80 A"/>
    <property type="chains" value="O=1-393"/>
</dbReference>
<dbReference type="PDB" id="6J2X">
    <property type="method" value="EM"/>
    <property type="resolution" value="3.80 A"/>
    <property type="chains" value="O=1-393"/>
</dbReference>
<dbReference type="PDB" id="6J30">
    <property type="method" value="EM"/>
    <property type="resolution" value="4.50 A"/>
    <property type="chains" value="O=1-393"/>
</dbReference>
<dbReference type="PDB" id="7QO3">
    <property type="method" value="EM"/>
    <property type="resolution" value="6.10 A"/>
    <property type="chains" value="O=1-393"/>
</dbReference>
<dbReference type="PDB" id="7QO5">
    <property type="method" value="EM"/>
    <property type="resolution" value="6.00 A"/>
    <property type="chains" value="O=1-393"/>
</dbReference>
<dbReference type="PDB" id="7QO6">
    <property type="method" value="EM"/>
    <property type="resolution" value="6.30 A"/>
    <property type="chains" value="O=1-393"/>
</dbReference>
<dbReference type="PDBsum" id="2MQW"/>
<dbReference type="PDBsum" id="2MR3"/>
<dbReference type="PDBsum" id="2MRI"/>
<dbReference type="PDBsum" id="3J47"/>
<dbReference type="PDBsum" id="3JCK"/>
<dbReference type="PDBsum" id="3JCO"/>
<dbReference type="PDBsum" id="3JCP"/>
<dbReference type="PDBsum" id="4CR2"/>
<dbReference type="PDBsum" id="4CR3"/>
<dbReference type="PDBsum" id="4CR4"/>
<dbReference type="PDBsum" id="5A5B"/>
<dbReference type="PDBsum" id="5MPB"/>
<dbReference type="PDBsum" id="5MPC"/>
<dbReference type="PDBsum" id="5MPD"/>
<dbReference type="PDBsum" id="5MPE"/>
<dbReference type="PDBsum" id="5WVI"/>
<dbReference type="PDBsum" id="5WVK"/>
<dbReference type="PDBsum" id="6FVT"/>
<dbReference type="PDBsum" id="6FVU"/>
<dbReference type="PDBsum" id="6FVV"/>
<dbReference type="PDBsum" id="6FVW"/>
<dbReference type="PDBsum" id="6FVX"/>
<dbReference type="PDBsum" id="6FVY"/>
<dbReference type="PDBsum" id="6J2C"/>
<dbReference type="PDBsum" id="6J2N"/>
<dbReference type="PDBsum" id="6J2Q"/>
<dbReference type="PDBsum" id="6J2X"/>
<dbReference type="PDBsum" id="6J30"/>
<dbReference type="PDBsum" id="7QO3"/>
<dbReference type="PDBsum" id="7QO5"/>
<dbReference type="PDBsum" id="7QO6"/>
<dbReference type="BMRB" id="Q04062"/>
<dbReference type="EMDB" id="EMD-14082"/>
<dbReference type="EMDB" id="EMD-14084"/>
<dbReference type="EMDB" id="EMD-14085"/>
<dbReference type="EMDB" id="EMD-3136"/>
<dbReference type="EMDB" id="EMD-3536"/>
<dbReference type="EMDB" id="EMD-3537"/>
<dbReference type="EMDB" id="EMD-4321"/>
<dbReference type="EMDB" id="EMD-4322"/>
<dbReference type="EMDB" id="EMD-4323"/>
<dbReference type="EMDB" id="EMD-4324"/>
<dbReference type="EMDB" id="EMD-6693"/>
<dbReference type="EMDB" id="EMD-6694"/>
<dbReference type="EMDB" id="EMD-9769"/>
<dbReference type="EMDB" id="EMD-9770"/>
<dbReference type="EMDB" id="EMD-9771"/>
<dbReference type="EMDB" id="EMD-9772"/>
<dbReference type="EMDB" id="EMD-9773"/>
<dbReference type="SMR" id="Q04062"/>
<dbReference type="BioGRID" id="32485">
    <property type="interactions" value="122"/>
</dbReference>
<dbReference type="ComplexPortal" id="CPX-2262">
    <property type="entry name" value="26S proteasome complex"/>
</dbReference>
<dbReference type="DIP" id="DIP-5261N"/>
<dbReference type="FunCoup" id="Q04062">
    <property type="interactions" value="1620"/>
</dbReference>
<dbReference type="IntAct" id="Q04062">
    <property type="interactions" value="79"/>
</dbReference>
<dbReference type="MINT" id="Q04062"/>
<dbReference type="STRING" id="4932.YDR427W"/>
<dbReference type="iPTMnet" id="Q04062"/>
<dbReference type="PaxDb" id="4932-YDR427W"/>
<dbReference type="PeptideAtlas" id="Q04062"/>
<dbReference type="EnsemblFungi" id="YDR427W_mRNA">
    <property type="protein sequence ID" value="YDR427W"/>
    <property type="gene ID" value="YDR427W"/>
</dbReference>
<dbReference type="GeneID" id="852037"/>
<dbReference type="KEGG" id="sce:YDR427W"/>
<dbReference type="AGR" id="SGD:S000002835"/>
<dbReference type="SGD" id="S000002835">
    <property type="gene designation" value="RPN9"/>
</dbReference>
<dbReference type="VEuPathDB" id="FungiDB:YDR427W"/>
<dbReference type="eggNOG" id="KOG2908">
    <property type="taxonomic scope" value="Eukaryota"/>
</dbReference>
<dbReference type="GeneTree" id="ENSGT00390000001802"/>
<dbReference type="HOGENOM" id="CLU_042989_0_0_1"/>
<dbReference type="InParanoid" id="Q04062"/>
<dbReference type="OMA" id="SFEDYWE"/>
<dbReference type="OrthoDB" id="1093at2759"/>
<dbReference type="BioCyc" id="YEAST:G3O-29967-MONOMER"/>
<dbReference type="Reactome" id="R-SCE-1236978">
    <property type="pathway name" value="Cross-presentation of soluble exogenous antigens (endosomes)"/>
</dbReference>
<dbReference type="Reactome" id="R-SCE-5668541">
    <property type="pathway name" value="TNFR2 non-canonical NF-kB pathway"/>
</dbReference>
<dbReference type="Reactome" id="R-SCE-5687128">
    <property type="pathway name" value="MAPK6/MAPK4 signaling"/>
</dbReference>
<dbReference type="Reactome" id="R-SCE-5689880">
    <property type="pathway name" value="Ub-specific processing proteases"/>
</dbReference>
<dbReference type="Reactome" id="R-SCE-6798695">
    <property type="pathway name" value="Neutrophil degranulation"/>
</dbReference>
<dbReference type="Reactome" id="R-SCE-68949">
    <property type="pathway name" value="Orc1 removal from chromatin"/>
</dbReference>
<dbReference type="Reactome" id="R-SCE-69017">
    <property type="pathway name" value="CDK-mediated phosphorylation and removal of Cdc6"/>
</dbReference>
<dbReference type="Reactome" id="R-SCE-69601">
    <property type="pathway name" value="Ubiquitin Mediated Degradation of Phosphorylated Cdc25A"/>
</dbReference>
<dbReference type="Reactome" id="R-SCE-8854050">
    <property type="pathway name" value="FBXL7 down-regulates AURKA during mitotic entry and in early mitosis"/>
</dbReference>
<dbReference type="Reactome" id="R-SCE-8948751">
    <property type="pathway name" value="Regulation of PTEN stability and activity"/>
</dbReference>
<dbReference type="Reactome" id="R-SCE-8951664">
    <property type="pathway name" value="Neddylation"/>
</dbReference>
<dbReference type="Reactome" id="R-SCE-9755511">
    <property type="pathway name" value="KEAP1-NFE2L2 pathway"/>
</dbReference>
<dbReference type="Reactome" id="R-SCE-983168">
    <property type="pathway name" value="Antigen processing: Ubiquitination &amp; Proteasome degradation"/>
</dbReference>
<dbReference type="Reactome" id="R-SCE-9907900">
    <property type="pathway name" value="Proteasome assembly"/>
</dbReference>
<dbReference type="BioGRID-ORCS" id="852037">
    <property type="hits" value="0 hits in 10 CRISPR screens"/>
</dbReference>
<dbReference type="EvolutionaryTrace" id="Q04062"/>
<dbReference type="PRO" id="PR:Q04062"/>
<dbReference type="Proteomes" id="UP000002311">
    <property type="component" value="Chromosome IV"/>
</dbReference>
<dbReference type="RNAct" id="Q04062">
    <property type="molecule type" value="protein"/>
</dbReference>
<dbReference type="GO" id="GO:0005829">
    <property type="term" value="C:cytosol"/>
    <property type="evidence" value="ECO:0000314"/>
    <property type="project" value="SGD"/>
</dbReference>
<dbReference type="GO" id="GO:0005634">
    <property type="term" value="C:nucleus"/>
    <property type="evidence" value="ECO:0000314"/>
    <property type="project" value="SGD"/>
</dbReference>
<dbReference type="GO" id="GO:0000502">
    <property type="term" value="C:proteasome complex"/>
    <property type="evidence" value="ECO:0000353"/>
    <property type="project" value="ComplexPortal"/>
</dbReference>
<dbReference type="GO" id="GO:0008541">
    <property type="term" value="C:proteasome regulatory particle, lid subcomplex"/>
    <property type="evidence" value="ECO:0000314"/>
    <property type="project" value="SGD"/>
</dbReference>
<dbReference type="GO" id="GO:0034515">
    <property type="term" value="C:proteasome storage granule"/>
    <property type="evidence" value="ECO:0000314"/>
    <property type="project" value="SGD"/>
</dbReference>
<dbReference type="GO" id="GO:0005198">
    <property type="term" value="F:structural molecule activity"/>
    <property type="evidence" value="ECO:0000315"/>
    <property type="project" value="SGD"/>
</dbReference>
<dbReference type="GO" id="GO:0043248">
    <property type="term" value="P:proteasome assembly"/>
    <property type="evidence" value="ECO:0000315"/>
    <property type="project" value="SGD"/>
</dbReference>
<dbReference type="GO" id="GO:0043161">
    <property type="term" value="P:proteasome-mediated ubiquitin-dependent protein catabolic process"/>
    <property type="evidence" value="ECO:0000314"/>
    <property type="project" value="ComplexPortal"/>
</dbReference>
<dbReference type="GO" id="GO:0006511">
    <property type="term" value="P:ubiquitin-dependent protein catabolic process"/>
    <property type="evidence" value="ECO:0000315"/>
    <property type="project" value="SGD"/>
</dbReference>
<dbReference type="InterPro" id="IPR000717">
    <property type="entry name" value="PCI_dom"/>
</dbReference>
<dbReference type="InterPro" id="IPR054179">
    <property type="entry name" value="PSD13_N"/>
</dbReference>
<dbReference type="InterPro" id="IPR035298">
    <property type="entry name" value="PSMD13"/>
</dbReference>
<dbReference type="InterPro" id="IPR040798">
    <property type="entry name" value="Rpn9_C"/>
</dbReference>
<dbReference type="InterPro" id="IPR036390">
    <property type="entry name" value="WH_DNA-bd_sf"/>
</dbReference>
<dbReference type="PANTHER" id="PTHR10539">
    <property type="entry name" value="26S PROTEASOME NON-ATPASE REGULATORY SUBUNIT 13"/>
    <property type="match status" value="1"/>
</dbReference>
<dbReference type="PANTHER" id="PTHR10539:SF0">
    <property type="entry name" value="26S PROTEASOME NON-ATPASE REGULATORY SUBUNIT 13"/>
    <property type="match status" value="1"/>
</dbReference>
<dbReference type="Pfam" id="PF01399">
    <property type="entry name" value="PCI"/>
    <property type="match status" value="1"/>
</dbReference>
<dbReference type="Pfam" id="PF22037">
    <property type="entry name" value="PSD13_N"/>
    <property type="match status" value="1"/>
</dbReference>
<dbReference type="Pfam" id="PF18261">
    <property type="entry name" value="Rpn9_C"/>
    <property type="match status" value="1"/>
</dbReference>
<dbReference type="SMART" id="SM00088">
    <property type="entry name" value="PINT"/>
    <property type="match status" value="1"/>
</dbReference>
<dbReference type="SUPFAM" id="SSF46785">
    <property type="entry name" value="Winged helix' DNA-binding domain"/>
    <property type="match status" value="1"/>
</dbReference>
<dbReference type="PROSITE" id="PS50250">
    <property type="entry name" value="PCI"/>
    <property type="match status" value="1"/>
</dbReference>
<gene>
    <name type="primary">RPN9</name>
    <name type="synonym">NAS7</name>
    <name type="ordered locus">YDR427W</name>
    <name type="ORF">D9461.14</name>
</gene>
<keyword id="KW-0002">3D-structure</keyword>
<keyword id="KW-0903">Direct protein sequencing</keyword>
<keyword id="KW-0647">Proteasome</keyword>
<keyword id="KW-1185">Reference proteome</keyword>
<proteinExistence type="evidence at protein level"/>
<comment type="function">
    <text evidence="3">Acts as a regulatory subunit of the 26S proteasome which is involved in the ATP-dependent degradation of ubiquitinated proteins.</text>
</comment>
<comment type="interaction">
    <interactant intactId="EBI-15944">
        <id>Q04062</id>
    </interactant>
    <interactant intactId="EBI-11219">
        <id>P43588</id>
        <label>RPN11</label>
    </interactant>
    <organismsDiffer>false</organismsDiffer>
    <experiments>6</experiments>
</comment>
<comment type="interaction">
    <interactant intactId="EBI-15944">
        <id>Q04062</id>
    </interactant>
    <interactant intactId="EBI-15935">
        <id>Q12250</id>
        <label>RPN5</label>
    </interactant>
    <organismsDiffer>false</organismsDiffer>
    <experiments>9</experiments>
</comment>
<comment type="interaction">
    <interactant intactId="EBI-15944">
        <id>Q04062</id>
    </interactant>
    <interactant intactId="EBI-308">
        <id>Q12377</id>
        <label>RPN6</label>
    </interactant>
    <organismsDiffer>false</organismsDiffer>
    <experiments>4</experiments>
</comment>
<comment type="interaction">
    <interactant intactId="EBI-15944">
        <id>Q04062</id>
    </interactant>
    <interactant intactId="EBI-36176">
        <id>Q08723</id>
        <label>RPN8</label>
    </interactant>
    <organismsDiffer>false</organismsDiffer>
    <experiments>6</experiments>
</comment>
<comment type="interaction">
    <interactant intactId="EBI-15944">
        <id>Q04062</id>
    </interactant>
    <interactant intactId="EBI-13905">
        <id>P33298</id>
        <label>RPT3</label>
    </interactant>
    <organismsDiffer>false</organismsDiffer>
    <experiments>4</experiments>
</comment>
<comment type="miscellaneous">
    <text evidence="2">Present with 12400 molecules/cell in log phase SD medium.</text>
</comment>
<comment type="similarity">
    <text evidence="4">Belongs to the proteasome subunit S11 family.</text>
</comment>
<feature type="chain" id="PRO_0000173870" description="26S proteasome regulatory subunit RPN9">
    <location>
        <begin position="1"/>
        <end position="393"/>
    </location>
</feature>
<feature type="domain" description="PCI" evidence="1">
    <location>
        <begin position="187"/>
        <end position="355"/>
    </location>
</feature>
<feature type="helix" evidence="6">
    <location>
        <begin position="7"/>
        <end position="16"/>
    </location>
</feature>
<feature type="helix" evidence="6">
    <location>
        <begin position="20"/>
        <end position="23"/>
    </location>
</feature>
<feature type="helix" evidence="6">
    <location>
        <begin position="24"/>
        <end position="35"/>
    </location>
</feature>
<feature type="helix" evidence="6">
    <location>
        <begin position="38"/>
        <end position="51"/>
    </location>
</feature>
<feature type="helix" evidence="6">
    <location>
        <begin position="52"/>
        <end position="54"/>
    </location>
</feature>
<feature type="helix" evidence="6">
    <location>
        <begin position="58"/>
        <end position="63"/>
    </location>
</feature>
<feature type="helix" evidence="6">
    <location>
        <begin position="65"/>
        <end position="68"/>
    </location>
</feature>
<feature type="helix" evidence="6">
    <location>
        <begin position="69"/>
        <end position="71"/>
    </location>
</feature>
<feature type="helix" evidence="6">
    <location>
        <begin position="75"/>
        <end position="88"/>
    </location>
</feature>
<feature type="helix" evidence="6">
    <location>
        <begin position="92"/>
        <end position="112"/>
    </location>
</feature>
<feature type="turn" evidence="6">
    <location>
        <begin position="115"/>
        <end position="118"/>
    </location>
</feature>
<feature type="helix" evidence="6">
    <location>
        <begin position="122"/>
        <end position="140"/>
    </location>
</feature>
<feature type="helix" evidence="6">
    <location>
        <begin position="143"/>
        <end position="159"/>
    </location>
</feature>
<feature type="helix" evidence="6">
    <location>
        <begin position="165"/>
        <end position="182"/>
    </location>
</feature>
<feature type="helix" evidence="6">
    <location>
        <begin position="185"/>
        <end position="198"/>
    </location>
</feature>
<feature type="helix" evidence="6">
    <location>
        <begin position="207"/>
        <end position="223"/>
    </location>
</feature>
<feature type="helix" evidence="6">
    <location>
        <begin position="231"/>
        <end position="234"/>
    </location>
</feature>
<feature type="helix" evidence="6">
    <location>
        <begin position="239"/>
        <end position="242"/>
    </location>
</feature>
<feature type="helix" evidence="6">
    <location>
        <begin position="246"/>
        <end position="248"/>
    </location>
</feature>
<feature type="helix" evidence="6">
    <location>
        <begin position="249"/>
        <end position="259"/>
    </location>
</feature>
<feature type="helix" evidence="6">
    <location>
        <begin position="263"/>
        <end position="276"/>
    </location>
</feature>
<feature type="helix" evidence="6">
    <location>
        <begin position="278"/>
        <end position="281"/>
    </location>
</feature>
<feature type="helix" evidence="6">
    <location>
        <begin position="284"/>
        <end position="302"/>
    </location>
</feature>
<feature type="strand" evidence="5">
    <location>
        <begin position="306"/>
        <end position="309"/>
    </location>
</feature>
<feature type="helix" evidence="6">
    <location>
        <begin position="310"/>
        <end position="317"/>
    </location>
</feature>
<feature type="turn" evidence="6">
    <location>
        <begin position="321"/>
        <end position="323"/>
    </location>
</feature>
<feature type="helix" evidence="6">
    <location>
        <begin position="324"/>
        <end position="333"/>
    </location>
</feature>
<feature type="strand" evidence="6">
    <location>
        <begin position="336"/>
        <end position="338"/>
    </location>
</feature>
<feature type="strand" evidence="5">
    <location>
        <begin position="340"/>
        <end position="342"/>
    </location>
</feature>
<feature type="turn" evidence="6">
    <location>
        <begin position="343"/>
        <end position="346"/>
    </location>
</feature>
<feature type="strand" evidence="5">
    <location>
        <begin position="347"/>
        <end position="349"/>
    </location>
</feature>
<feature type="helix" evidence="6">
    <location>
        <begin position="360"/>
        <end position="384"/>
    </location>
</feature>
<feature type="turn" evidence="6">
    <location>
        <begin position="385"/>
        <end position="390"/>
    </location>
</feature>
<organism>
    <name type="scientific">Saccharomyces cerevisiae (strain ATCC 204508 / S288c)</name>
    <name type="common">Baker's yeast</name>
    <dbReference type="NCBI Taxonomy" id="559292"/>
    <lineage>
        <taxon>Eukaryota</taxon>
        <taxon>Fungi</taxon>
        <taxon>Dikarya</taxon>
        <taxon>Ascomycota</taxon>
        <taxon>Saccharomycotina</taxon>
        <taxon>Saccharomycetes</taxon>
        <taxon>Saccharomycetales</taxon>
        <taxon>Saccharomycetaceae</taxon>
        <taxon>Saccharomyces</taxon>
    </lineage>
</organism>